<accession>A9WBM7</accession>
<comment type="function">
    <text evidence="1">Catalyzes the NADPH-dependent reduction of L-glutamate 5-phosphate into L-glutamate 5-semialdehyde and phosphate. The product spontaneously undergoes cyclization to form 1-pyrroline-5-carboxylate.</text>
</comment>
<comment type="catalytic activity">
    <reaction evidence="1">
        <text>L-glutamate 5-semialdehyde + phosphate + NADP(+) = L-glutamyl 5-phosphate + NADPH + H(+)</text>
        <dbReference type="Rhea" id="RHEA:19541"/>
        <dbReference type="ChEBI" id="CHEBI:15378"/>
        <dbReference type="ChEBI" id="CHEBI:43474"/>
        <dbReference type="ChEBI" id="CHEBI:57783"/>
        <dbReference type="ChEBI" id="CHEBI:58066"/>
        <dbReference type="ChEBI" id="CHEBI:58274"/>
        <dbReference type="ChEBI" id="CHEBI:58349"/>
        <dbReference type="EC" id="1.2.1.41"/>
    </reaction>
</comment>
<comment type="pathway">
    <text evidence="1">Amino-acid biosynthesis; L-proline biosynthesis; L-glutamate 5-semialdehyde from L-glutamate: step 2/2.</text>
</comment>
<comment type="subcellular location">
    <subcellularLocation>
        <location evidence="1">Cytoplasm</location>
    </subcellularLocation>
</comment>
<comment type="similarity">
    <text evidence="1">Belongs to the gamma-glutamyl phosphate reductase family.</text>
</comment>
<dbReference type="EC" id="1.2.1.41" evidence="1"/>
<dbReference type="EMBL" id="CP000909">
    <property type="protein sequence ID" value="ABY34834.1"/>
    <property type="molecule type" value="Genomic_DNA"/>
</dbReference>
<dbReference type="RefSeq" id="WP_012257488.1">
    <property type="nucleotide sequence ID" value="NC_010175.1"/>
</dbReference>
<dbReference type="RefSeq" id="YP_001635223.1">
    <property type="nucleotide sequence ID" value="NC_010175.1"/>
</dbReference>
<dbReference type="SMR" id="A9WBM7"/>
<dbReference type="FunCoup" id="A9WBM7">
    <property type="interactions" value="363"/>
</dbReference>
<dbReference type="STRING" id="324602.Caur_1616"/>
<dbReference type="EnsemblBacteria" id="ABY34834">
    <property type="protein sequence ID" value="ABY34834"/>
    <property type="gene ID" value="Caur_1616"/>
</dbReference>
<dbReference type="KEGG" id="cau:Caur_1616"/>
<dbReference type="PATRIC" id="fig|324602.8.peg.1851"/>
<dbReference type="eggNOG" id="COG0014">
    <property type="taxonomic scope" value="Bacteria"/>
</dbReference>
<dbReference type="HOGENOM" id="CLU_030231_0_0_0"/>
<dbReference type="InParanoid" id="A9WBM7"/>
<dbReference type="UniPathway" id="UPA00098">
    <property type="reaction ID" value="UER00360"/>
</dbReference>
<dbReference type="Proteomes" id="UP000002008">
    <property type="component" value="Chromosome"/>
</dbReference>
<dbReference type="GO" id="GO:0005737">
    <property type="term" value="C:cytoplasm"/>
    <property type="evidence" value="ECO:0007669"/>
    <property type="project" value="UniProtKB-SubCell"/>
</dbReference>
<dbReference type="GO" id="GO:0004350">
    <property type="term" value="F:glutamate-5-semialdehyde dehydrogenase activity"/>
    <property type="evidence" value="ECO:0000318"/>
    <property type="project" value="GO_Central"/>
</dbReference>
<dbReference type="GO" id="GO:0050661">
    <property type="term" value="F:NADP binding"/>
    <property type="evidence" value="ECO:0007669"/>
    <property type="project" value="InterPro"/>
</dbReference>
<dbReference type="GO" id="GO:0055129">
    <property type="term" value="P:L-proline biosynthetic process"/>
    <property type="evidence" value="ECO:0007669"/>
    <property type="project" value="UniProtKB-UniRule"/>
</dbReference>
<dbReference type="CDD" id="cd07079">
    <property type="entry name" value="ALDH_F18-19_ProA-GPR"/>
    <property type="match status" value="1"/>
</dbReference>
<dbReference type="FunFam" id="3.40.309.10:FF:000006">
    <property type="entry name" value="Gamma-glutamyl phosphate reductase"/>
    <property type="match status" value="1"/>
</dbReference>
<dbReference type="Gene3D" id="3.40.605.10">
    <property type="entry name" value="Aldehyde Dehydrogenase, Chain A, domain 1"/>
    <property type="match status" value="1"/>
</dbReference>
<dbReference type="Gene3D" id="3.40.309.10">
    <property type="entry name" value="Aldehyde Dehydrogenase, Chain A, domain 2"/>
    <property type="match status" value="1"/>
</dbReference>
<dbReference type="HAMAP" id="MF_00412">
    <property type="entry name" value="ProA"/>
    <property type="match status" value="1"/>
</dbReference>
<dbReference type="InterPro" id="IPR016161">
    <property type="entry name" value="Ald_DH/histidinol_DH"/>
</dbReference>
<dbReference type="InterPro" id="IPR016163">
    <property type="entry name" value="Ald_DH_C"/>
</dbReference>
<dbReference type="InterPro" id="IPR016162">
    <property type="entry name" value="Ald_DH_N"/>
</dbReference>
<dbReference type="InterPro" id="IPR015590">
    <property type="entry name" value="Aldehyde_DH_dom"/>
</dbReference>
<dbReference type="InterPro" id="IPR020593">
    <property type="entry name" value="G-glutamylP_reductase_CS"/>
</dbReference>
<dbReference type="InterPro" id="IPR012134">
    <property type="entry name" value="Glu-5-SA_DH"/>
</dbReference>
<dbReference type="InterPro" id="IPR000965">
    <property type="entry name" value="GPR_dom"/>
</dbReference>
<dbReference type="NCBIfam" id="NF001221">
    <property type="entry name" value="PRK00197.1"/>
    <property type="match status" value="1"/>
</dbReference>
<dbReference type="NCBIfam" id="TIGR00407">
    <property type="entry name" value="proA"/>
    <property type="match status" value="1"/>
</dbReference>
<dbReference type="PANTHER" id="PTHR11063:SF8">
    <property type="entry name" value="DELTA-1-PYRROLINE-5-CARBOXYLATE SYNTHASE"/>
    <property type="match status" value="1"/>
</dbReference>
<dbReference type="PANTHER" id="PTHR11063">
    <property type="entry name" value="GLUTAMATE SEMIALDEHYDE DEHYDROGENASE"/>
    <property type="match status" value="1"/>
</dbReference>
<dbReference type="Pfam" id="PF00171">
    <property type="entry name" value="Aldedh"/>
    <property type="match status" value="1"/>
</dbReference>
<dbReference type="PIRSF" id="PIRSF000151">
    <property type="entry name" value="GPR"/>
    <property type="match status" value="1"/>
</dbReference>
<dbReference type="SUPFAM" id="SSF53720">
    <property type="entry name" value="ALDH-like"/>
    <property type="match status" value="1"/>
</dbReference>
<dbReference type="PROSITE" id="PS01223">
    <property type="entry name" value="PROA"/>
    <property type="match status" value="1"/>
</dbReference>
<protein>
    <recommendedName>
        <fullName evidence="1">Gamma-glutamyl phosphate reductase</fullName>
        <shortName evidence="1">GPR</shortName>
        <ecNumber evidence="1">1.2.1.41</ecNumber>
    </recommendedName>
    <alternativeName>
        <fullName evidence="1">Glutamate-5-semialdehyde dehydrogenase</fullName>
    </alternativeName>
    <alternativeName>
        <fullName evidence="1">Glutamyl-gamma-semialdehyde dehydrogenase</fullName>
        <shortName evidence="1">GSA dehydrogenase</shortName>
    </alternativeName>
</protein>
<reference key="1">
    <citation type="journal article" date="2011" name="BMC Genomics">
        <title>Complete genome sequence of the filamentous anoxygenic phototrophic bacterium Chloroflexus aurantiacus.</title>
        <authorList>
            <person name="Tang K.H."/>
            <person name="Barry K."/>
            <person name="Chertkov O."/>
            <person name="Dalin E."/>
            <person name="Han C.S."/>
            <person name="Hauser L.J."/>
            <person name="Honchak B.M."/>
            <person name="Karbach L.E."/>
            <person name="Land M.L."/>
            <person name="Lapidus A."/>
            <person name="Larimer F.W."/>
            <person name="Mikhailova N."/>
            <person name="Pitluck S."/>
            <person name="Pierson B.K."/>
            <person name="Blankenship R.E."/>
        </authorList>
    </citation>
    <scope>NUCLEOTIDE SEQUENCE [LARGE SCALE GENOMIC DNA]</scope>
    <source>
        <strain>ATCC 29366 / DSM 635 / J-10-fl</strain>
    </source>
</reference>
<gene>
    <name evidence="1" type="primary">proA</name>
    <name type="ordered locus">Caur_1616</name>
</gene>
<name>PROA_CHLAA</name>
<evidence type="ECO:0000255" key="1">
    <source>
        <dbReference type="HAMAP-Rule" id="MF_00412"/>
    </source>
</evidence>
<feature type="chain" id="PRO_0000340877" description="Gamma-glutamyl phosphate reductase">
    <location>
        <begin position="1"/>
        <end position="422"/>
    </location>
</feature>
<sequence>MVDLEAIGRRAKTAARALAKLSTEQKNAALCAIADGLLARQDKILAANAADVADAEKGGTPPAIVDRMLLTPARLAAIAGDCRQVASLPDPVGEIFDRRELPSGLRLYKRRVPIGVIGAIYEARPNVTVDIASLCLKAGNAVILRGGSDIARSVAATTEVIALALEQAGLPAFAVQSIIDPDRELVRQLLRLDRYVDMIIPRGGAGLHRFCVENATVPVIVGGMGVSHIYVEPSADFARAVPVIVNAKVQRPGACNALDTLLVHRAAASTFLPLVAAALAQHGVELRCDLEALAILADAPGHEAWNLKPASPTDFGCEFLALIVAIKIVGSIDEALDHIALYGGHSEAILTGDPISAERFTREVDATAVFVNASTRFNDGGQFGLGAEVAISTNRLHARGPMGLQELTTYTWIGEGDYLVRA</sequence>
<organism>
    <name type="scientific">Chloroflexus aurantiacus (strain ATCC 29366 / DSM 635 / J-10-fl)</name>
    <dbReference type="NCBI Taxonomy" id="324602"/>
    <lineage>
        <taxon>Bacteria</taxon>
        <taxon>Bacillati</taxon>
        <taxon>Chloroflexota</taxon>
        <taxon>Chloroflexia</taxon>
        <taxon>Chloroflexales</taxon>
        <taxon>Chloroflexineae</taxon>
        <taxon>Chloroflexaceae</taxon>
        <taxon>Chloroflexus</taxon>
    </lineage>
</organism>
<proteinExistence type="inferred from homology"/>
<keyword id="KW-0028">Amino-acid biosynthesis</keyword>
<keyword id="KW-0963">Cytoplasm</keyword>
<keyword id="KW-0521">NADP</keyword>
<keyword id="KW-0560">Oxidoreductase</keyword>
<keyword id="KW-0641">Proline biosynthesis</keyword>
<keyword id="KW-1185">Reference proteome</keyword>